<feature type="chain" id="PRO_1000073525" description="tRNA N6-adenosine threonylcarbamoyltransferase">
    <location>
        <begin position="1"/>
        <end position="341"/>
    </location>
</feature>
<feature type="binding site" evidence="1">
    <location>
        <position position="115"/>
    </location>
    <ligand>
        <name>Fe cation</name>
        <dbReference type="ChEBI" id="CHEBI:24875"/>
    </ligand>
</feature>
<feature type="binding site" evidence="1">
    <location>
        <position position="119"/>
    </location>
    <ligand>
        <name>Fe cation</name>
        <dbReference type="ChEBI" id="CHEBI:24875"/>
    </ligand>
</feature>
<feature type="binding site" evidence="1">
    <location>
        <begin position="137"/>
        <end position="141"/>
    </location>
    <ligand>
        <name>substrate</name>
    </ligand>
</feature>
<feature type="binding site" evidence="1">
    <location>
        <position position="170"/>
    </location>
    <ligand>
        <name>substrate</name>
    </ligand>
</feature>
<feature type="binding site" evidence="1">
    <location>
        <position position="183"/>
    </location>
    <ligand>
        <name>substrate</name>
    </ligand>
</feature>
<feature type="binding site" evidence="1">
    <location>
        <position position="187"/>
    </location>
    <ligand>
        <name>substrate</name>
    </ligand>
</feature>
<feature type="binding site" evidence="1">
    <location>
        <position position="276"/>
    </location>
    <ligand>
        <name>substrate</name>
    </ligand>
</feature>
<feature type="binding site" evidence="1">
    <location>
        <position position="304"/>
    </location>
    <ligand>
        <name>Fe cation</name>
        <dbReference type="ChEBI" id="CHEBI:24875"/>
    </ligand>
</feature>
<organism>
    <name type="scientific">Staphylococcus aureus (strain Newman)</name>
    <dbReference type="NCBI Taxonomy" id="426430"/>
    <lineage>
        <taxon>Bacteria</taxon>
        <taxon>Bacillati</taxon>
        <taxon>Bacillota</taxon>
        <taxon>Bacilli</taxon>
        <taxon>Bacillales</taxon>
        <taxon>Staphylococcaceae</taxon>
        <taxon>Staphylococcus</taxon>
    </lineage>
</organism>
<protein>
    <recommendedName>
        <fullName evidence="1">tRNA N6-adenosine threonylcarbamoyltransferase</fullName>
        <ecNumber evidence="1">2.3.1.234</ecNumber>
    </recommendedName>
    <alternativeName>
        <fullName evidence="1">N6-L-threonylcarbamoyladenine synthase</fullName>
        <shortName evidence="1">t(6)A synthase</shortName>
    </alternativeName>
    <alternativeName>
        <fullName evidence="1">t(6)A37 threonylcarbamoyladenosine biosynthesis protein TsaD</fullName>
    </alternativeName>
    <alternativeName>
        <fullName evidence="1">tRNA threonylcarbamoyladenosine biosynthesis protein TsaD</fullName>
    </alternativeName>
</protein>
<dbReference type="EC" id="2.3.1.234" evidence="1"/>
<dbReference type="EMBL" id="AP009351">
    <property type="protein sequence ID" value="BAF68228.1"/>
    <property type="molecule type" value="Genomic_DNA"/>
</dbReference>
<dbReference type="RefSeq" id="WP_000159034.1">
    <property type="nucleotide sequence ID" value="NZ_JBBIAE010000015.1"/>
</dbReference>
<dbReference type="SMR" id="A6QIP6"/>
<dbReference type="KEGG" id="sae:NWMN_1956"/>
<dbReference type="HOGENOM" id="CLU_023208_0_2_9"/>
<dbReference type="Proteomes" id="UP000006386">
    <property type="component" value="Chromosome"/>
</dbReference>
<dbReference type="GO" id="GO:0005737">
    <property type="term" value="C:cytoplasm"/>
    <property type="evidence" value="ECO:0007669"/>
    <property type="project" value="UniProtKB-SubCell"/>
</dbReference>
<dbReference type="GO" id="GO:0005506">
    <property type="term" value="F:iron ion binding"/>
    <property type="evidence" value="ECO:0007669"/>
    <property type="project" value="UniProtKB-UniRule"/>
</dbReference>
<dbReference type="GO" id="GO:0061711">
    <property type="term" value="F:N(6)-L-threonylcarbamoyladenine synthase activity"/>
    <property type="evidence" value="ECO:0007669"/>
    <property type="project" value="UniProtKB-EC"/>
</dbReference>
<dbReference type="GO" id="GO:0002949">
    <property type="term" value="P:tRNA threonylcarbamoyladenosine modification"/>
    <property type="evidence" value="ECO:0007669"/>
    <property type="project" value="UniProtKB-UniRule"/>
</dbReference>
<dbReference type="CDD" id="cd24133">
    <property type="entry name" value="ASKHA_NBD_TsaD_bac"/>
    <property type="match status" value="1"/>
</dbReference>
<dbReference type="FunFam" id="3.30.420.40:FF:000012">
    <property type="entry name" value="tRNA N6-adenosine threonylcarbamoyltransferase"/>
    <property type="match status" value="1"/>
</dbReference>
<dbReference type="FunFam" id="3.30.420.40:FF:000040">
    <property type="entry name" value="tRNA N6-adenosine threonylcarbamoyltransferase"/>
    <property type="match status" value="1"/>
</dbReference>
<dbReference type="Gene3D" id="3.30.420.40">
    <property type="match status" value="2"/>
</dbReference>
<dbReference type="HAMAP" id="MF_01445">
    <property type="entry name" value="TsaD"/>
    <property type="match status" value="1"/>
</dbReference>
<dbReference type="InterPro" id="IPR043129">
    <property type="entry name" value="ATPase_NBD"/>
</dbReference>
<dbReference type="InterPro" id="IPR000905">
    <property type="entry name" value="Gcp-like_dom"/>
</dbReference>
<dbReference type="InterPro" id="IPR017861">
    <property type="entry name" value="KAE1/TsaD"/>
</dbReference>
<dbReference type="InterPro" id="IPR017860">
    <property type="entry name" value="Peptidase_M22_CS"/>
</dbReference>
<dbReference type="InterPro" id="IPR022450">
    <property type="entry name" value="TsaD"/>
</dbReference>
<dbReference type="NCBIfam" id="TIGR00329">
    <property type="entry name" value="gcp_kae1"/>
    <property type="match status" value="1"/>
</dbReference>
<dbReference type="NCBIfam" id="TIGR03723">
    <property type="entry name" value="T6A_TsaD_YgjD"/>
    <property type="match status" value="1"/>
</dbReference>
<dbReference type="PANTHER" id="PTHR11735">
    <property type="entry name" value="TRNA N6-ADENOSINE THREONYLCARBAMOYLTRANSFERASE"/>
    <property type="match status" value="1"/>
</dbReference>
<dbReference type="PANTHER" id="PTHR11735:SF6">
    <property type="entry name" value="TRNA N6-ADENOSINE THREONYLCARBAMOYLTRANSFERASE, MITOCHONDRIAL"/>
    <property type="match status" value="1"/>
</dbReference>
<dbReference type="Pfam" id="PF00814">
    <property type="entry name" value="TsaD"/>
    <property type="match status" value="1"/>
</dbReference>
<dbReference type="PRINTS" id="PR00789">
    <property type="entry name" value="OSIALOPTASE"/>
</dbReference>
<dbReference type="SUPFAM" id="SSF53067">
    <property type="entry name" value="Actin-like ATPase domain"/>
    <property type="match status" value="2"/>
</dbReference>
<dbReference type="PROSITE" id="PS01016">
    <property type="entry name" value="GLYCOPROTEASE"/>
    <property type="match status" value="1"/>
</dbReference>
<accession>A6QIP6</accession>
<keyword id="KW-0012">Acyltransferase</keyword>
<keyword id="KW-0963">Cytoplasm</keyword>
<keyword id="KW-0408">Iron</keyword>
<keyword id="KW-0479">Metal-binding</keyword>
<keyword id="KW-0808">Transferase</keyword>
<keyword id="KW-0819">tRNA processing</keyword>
<comment type="function">
    <text evidence="1">Required for the formation of a threonylcarbamoyl group on adenosine at position 37 (t(6)A37) in tRNAs that read codons beginning with adenine. Is involved in the transfer of the threonylcarbamoyl moiety of threonylcarbamoyl-AMP (TC-AMP) to the N6 group of A37, together with TsaE and TsaB. TsaD likely plays a direct catalytic role in this reaction.</text>
</comment>
<comment type="catalytic activity">
    <reaction evidence="1">
        <text>L-threonylcarbamoyladenylate + adenosine(37) in tRNA = N(6)-L-threonylcarbamoyladenosine(37) in tRNA + AMP + H(+)</text>
        <dbReference type="Rhea" id="RHEA:37059"/>
        <dbReference type="Rhea" id="RHEA-COMP:10162"/>
        <dbReference type="Rhea" id="RHEA-COMP:10163"/>
        <dbReference type="ChEBI" id="CHEBI:15378"/>
        <dbReference type="ChEBI" id="CHEBI:73682"/>
        <dbReference type="ChEBI" id="CHEBI:74411"/>
        <dbReference type="ChEBI" id="CHEBI:74418"/>
        <dbReference type="ChEBI" id="CHEBI:456215"/>
        <dbReference type="EC" id="2.3.1.234"/>
    </reaction>
</comment>
<comment type="cofactor">
    <cofactor evidence="1">
        <name>Fe(2+)</name>
        <dbReference type="ChEBI" id="CHEBI:29033"/>
    </cofactor>
    <text evidence="1">Binds 1 Fe(2+) ion per subunit.</text>
</comment>
<comment type="subcellular location">
    <subcellularLocation>
        <location evidence="1">Cytoplasm</location>
    </subcellularLocation>
</comment>
<comment type="similarity">
    <text evidence="1">Belongs to the KAE1 / TsaD family.</text>
</comment>
<name>TSAD_STAAE</name>
<sequence length="341" mass="36819">MTKDILILAVETSCDETSVSVIKNGRDILSNTVLSQIESHKRFGGVVPEVASRHHVEGITATINEALGDADVSIEDIDAIAVTEGPGLIGALLIGVNAAKALAFAYDKPLIPVHHIAGHIYANHIEEPLTFPLIALIVSGGHTELVYMKDHLSFEVIGETRDDAVGEAYDKVARTIGLNYPGGPQVDRLAAEGEDTYSFPRVWLDKDSYDFSFSGLKSAVINQLHNQRQKNIPIIEANVATSFQNSVVEVLTFKAIQACKEYGVQRLIVAGGVASNKGLRQSLADQCKVNDIQLTIPSPKLCTDNAAMIGVAGHYLYQQGRFADLALNGHSNIDLEEYSAE</sequence>
<gene>
    <name evidence="1" type="primary">tsaD</name>
    <name type="synonym">gcp</name>
    <name type="ordered locus">NWMN_1956</name>
</gene>
<evidence type="ECO:0000255" key="1">
    <source>
        <dbReference type="HAMAP-Rule" id="MF_01445"/>
    </source>
</evidence>
<reference key="1">
    <citation type="journal article" date="2008" name="J. Bacteriol.">
        <title>Genome sequence of Staphylococcus aureus strain Newman and comparative analysis of staphylococcal genomes: polymorphism and evolution of two major pathogenicity islands.</title>
        <authorList>
            <person name="Baba T."/>
            <person name="Bae T."/>
            <person name="Schneewind O."/>
            <person name="Takeuchi F."/>
            <person name="Hiramatsu K."/>
        </authorList>
    </citation>
    <scope>NUCLEOTIDE SEQUENCE [LARGE SCALE GENOMIC DNA]</scope>
    <source>
        <strain>Newman</strain>
    </source>
</reference>
<proteinExistence type="inferred from homology"/>